<name>TPM_LEPDS</name>
<keyword id="KW-0020">Allergen</keyword>
<keyword id="KW-0175">Coiled coil</keyword>
<keyword id="KW-0677">Repeat</keyword>
<accession>Q9NFZ4</accession>
<organism>
    <name type="scientific">Lepidoglyphus destructor</name>
    <name type="common">Storage mite</name>
    <name type="synonym">Glycyphagus destructor</name>
    <dbReference type="NCBI Taxonomy" id="36936"/>
    <lineage>
        <taxon>Eukaryota</taxon>
        <taxon>Metazoa</taxon>
        <taxon>Ecdysozoa</taxon>
        <taxon>Arthropoda</taxon>
        <taxon>Chelicerata</taxon>
        <taxon>Arachnida</taxon>
        <taxon>Acari</taxon>
        <taxon>Acariformes</taxon>
        <taxon>Sarcoptiformes</taxon>
        <taxon>Astigmata</taxon>
        <taxon>Glycyphagoidea</taxon>
        <taxon>Glycyphagidae</taxon>
        <taxon>Lepidoglyphus</taxon>
    </lineage>
</organism>
<comment type="function">
    <text>Tropomyosin, in association with the troponin complex, plays a central role in the calcium dependent regulation of muscle contraction.</text>
</comment>
<comment type="subunit">
    <text evidence="1">Homodimer.</text>
</comment>
<comment type="domain">
    <text>The molecule is in a coiled coil structure that is formed by 2 polypeptide chains. The sequence exhibits a prominent seven-residues periodicity.</text>
</comment>
<comment type="allergen">
    <text>Causes an allergic reaction in human. Common symptoms of mite allergy are bronchial asthma, allergic rhinitis and conjunctivitis.</text>
</comment>
<comment type="similarity">
    <text evidence="3">Belongs to the tropomyosin family.</text>
</comment>
<feature type="chain" id="PRO_0000205681" description="Tropomyosin">
    <location>
        <begin position="1"/>
        <end position="284"/>
    </location>
</feature>
<feature type="region of interest" description="Disordered" evidence="2">
    <location>
        <begin position="22"/>
        <end position="43"/>
    </location>
</feature>
<feature type="coiled-coil region" evidence="1">
    <location>
        <begin position="1"/>
        <end position="284"/>
    </location>
</feature>
<evidence type="ECO:0000250" key="1"/>
<evidence type="ECO:0000256" key="2">
    <source>
        <dbReference type="SAM" id="MobiDB-lite"/>
    </source>
</evidence>
<evidence type="ECO:0000305" key="3"/>
<dbReference type="EMBL" id="AJ250096">
    <property type="protein sequence ID" value="CAB71342.1"/>
    <property type="molecule type" value="mRNA"/>
</dbReference>
<dbReference type="SMR" id="Q9NFZ4"/>
<dbReference type="Allergome" id="3349">
    <property type="allergen name" value="Lep d 10.0101"/>
</dbReference>
<dbReference type="Allergome" id="437">
    <property type="allergen name" value="Lep d 10"/>
</dbReference>
<dbReference type="FunFam" id="1.20.5.170:FF:000005">
    <property type="entry name" value="Tropomyosin alpha-1 chain"/>
    <property type="match status" value="1"/>
</dbReference>
<dbReference type="FunFam" id="1.20.5.170:FF:000001">
    <property type="entry name" value="Tropomyosin alpha-1 chain isoform 1"/>
    <property type="match status" value="1"/>
</dbReference>
<dbReference type="FunFam" id="1.20.5.340:FF:000001">
    <property type="entry name" value="Tropomyosin alpha-1 chain isoform 2"/>
    <property type="match status" value="1"/>
</dbReference>
<dbReference type="Gene3D" id="1.20.5.170">
    <property type="match status" value="2"/>
</dbReference>
<dbReference type="Gene3D" id="1.20.5.340">
    <property type="match status" value="1"/>
</dbReference>
<dbReference type="InterPro" id="IPR000533">
    <property type="entry name" value="Tropomyosin"/>
</dbReference>
<dbReference type="PANTHER" id="PTHR19269">
    <property type="entry name" value="TROPOMYOSIN"/>
    <property type="match status" value="1"/>
</dbReference>
<dbReference type="Pfam" id="PF00261">
    <property type="entry name" value="Tropomyosin"/>
    <property type="match status" value="1"/>
</dbReference>
<dbReference type="PRINTS" id="PR00194">
    <property type="entry name" value="TROPOMYOSIN"/>
</dbReference>
<dbReference type="SUPFAM" id="SSF57997">
    <property type="entry name" value="Tropomyosin"/>
    <property type="match status" value="1"/>
</dbReference>
<dbReference type="PROSITE" id="PS00326">
    <property type="entry name" value="TROPOMYOSIN"/>
    <property type="match status" value="1"/>
</dbReference>
<proteinExistence type="evidence at protein level"/>
<sequence length="284" mass="32950">MEAIKNKMQAMKLEKDNAIDRAEIAEQKSRDANLRAEKSEEEVRGLQKKIQQIENELDQVQESLTQANTKLEEKEKSLQTAEGDVAALNRRIQLIEEDLERSEGRLKIATSKLEEASQSADESERMRKMLEHRSITDEERMEGLESQLKEARMMAEDADRKYDEVARKLAMVEADLERAEERAETGESKIVELEEELRVVGNNLKSLEVSEEKAQQREEAYEQQIRIMTTKLKEAEARAEFAERSVQKLQKEVDRLEDELVHEKEKYKSISDELDQTFAELTGY</sequence>
<protein>
    <recommendedName>
        <fullName>Tropomyosin</fullName>
    </recommendedName>
    <allergenName>Lep d 10</allergenName>
</protein>
<reference key="1">
    <citation type="journal article" date="2003" name="Int. Arch. Allergy Immunol.">
        <title>Cloning and characterisation of two IgE-binding proteins, homologous to tropomyosin and alpha-tubulin, from the mite Lepidoglyphus destructor.</title>
        <authorList>
            <person name="Saarne T."/>
            <person name="Kaiser L."/>
            <person name="Rasool O."/>
            <person name="Huecas S."/>
            <person name="van Hage-Hamsten M."/>
            <person name="Gafvelin G."/>
        </authorList>
    </citation>
    <scope>NUCLEOTIDE SEQUENCE [MRNA]</scope>
</reference>